<sequence>MTDLFANPDHTLDALGLRCPEPVMMVRKTVRNMQPGETLLIVADDPATTRDIPGFCRFMEHELVASQTETLPYRYLLRKNQ</sequence>
<accession>A7MHB0</accession>
<comment type="function">
    <text evidence="1">Sulfur carrier protein involved in sulfur trafficking in the cell. Part of a sulfur-relay system required for 2-thiolation during synthesis of 2-thiouridine of the modified wobble base 5-methylaminomethyl-2-thiouridine (mnm(5)s(2)U) in tRNA. Interacts with IscS and stimulates its cysteine desulfurase activity. Accepts an activated sulfur from IscS, which is then transferred to TusD, and thus determines the direction of sulfur flow from IscS to 2-thiouridine formation. Also appears to be involved in sulfur transfer for the biosynthesis of molybdopterin.</text>
</comment>
<comment type="pathway">
    <text evidence="1">tRNA modification.</text>
</comment>
<comment type="subunit">
    <text evidence="1">Interacts with IscS.</text>
</comment>
<comment type="subcellular location">
    <subcellularLocation>
        <location evidence="1">Cytoplasm</location>
    </subcellularLocation>
</comment>
<comment type="similarity">
    <text evidence="1">Belongs to the sulfur carrier protein TusA family.</text>
</comment>
<dbReference type="EMBL" id="CP000783">
    <property type="protein sequence ID" value="ABU79443.1"/>
    <property type="molecule type" value="Genomic_DNA"/>
</dbReference>
<dbReference type="RefSeq" id="WP_004386827.1">
    <property type="nucleotide sequence ID" value="NC_009778.1"/>
</dbReference>
<dbReference type="SMR" id="A7MHB0"/>
<dbReference type="GeneID" id="45713774"/>
<dbReference type="KEGG" id="esa:ESA_04263"/>
<dbReference type="HOGENOM" id="CLU_165255_5_0_6"/>
<dbReference type="Proteomes" id="UP000000260">
    <property type="component" value="Chromosome"/>
</dbReference>
<dbReference type="GO" id="GO:0005737">
    <property type="term" value="C:cytoplasm"/>
    <property type="evidence" value="ECO:0007669"/>
    <property type="project" value="UniProtKB-SubCell"/>
</dbReference>
<dbReference type="GO" id="GO:0097163">
    <property type="term" value="F:sulfur carrier activity"/>
    <property type="evidence" value="ECO:0007669"/>
    <property type="project" value="UniProtKB-UniRule"/>
</dbReference>
<dbReference type="GO" id="GO:0002143">
    <property type="term" value="P:tRNA wobble position uridine thiolation"/>
    <property type="evidence" value="ECO:0007669"/>
    <property type="project" value="InterPro"/>
</dbReference>
<dbReference type="CDD" id="cd03423">
    <property type="entry name" value="SirA"/>
    <property type="match status" value="1"/>
</dbReference>
<dbReference type="Gene3D" id="3.30.110.40">
    <property type="entry name" value="TusA-like domain"/>
    <property type="match status" value="1"/>
</dbReference>
<dbReference type="HAMAP" id="MF_00413">
    <property type="entry name" value="Thiourid_synth_A"/>
    <property type="match status" value="1"/>
</dbReference>
<dbReference type="InterPro" id="IPR022931">
    <property type="entry name" value="Sulphur_carrier_TusA"/>
</dbReference>
<dbReference type="InterPro" id="IPR001455">
    <property type="entry name" value="TusA-like"/>
</dbReference>
<dbReference type="InterPro" id="IPR036868">
    <property type="entry name" value="TusA-like_sf"/>
</dbReference>
<dbReference type="NCBIfam" id="NF001423">
    <property type="entry name" value="PRK00299.1"/>
    <property type="match status" value="1"/>
</dbReference>
<dbReference type="PANTHER" id="PTHR33279:SF2">
    <property type="entry name" value="SULFUR CARRIER PROTEIN TUSA"/>
    <property type="match status" value="1"/>
</dbReference>
<dbReference type="PANTHER" id="PTHR33279">
    <property type="entry name" value="SULFUR CARRIER PROTEIN YEDF-RELATED"/>
    <property type="match status" value="1"/>
</dbReference>
<dbReference type="Pfam" id="PF01206">
    <property type="entry name" value="TusA"/>
    <property type="match status" value="1"/>
</dbReference>
<dbReference type="SUPFAM" id="SSF64307">
    <property type="entry name" value="SirA-like"/>
    <property type="match status" value="1"/>
</dbReference>
<dbReference type="PROSITE" id="PS01148">
    <property type="entry name" value="UPF0033"/>
    <property type="match status" value="1"/>
</dbReference>
<feature type="chain" id="PRO_1000050013" description="Sulfur carrier protein TusA">
    <location>
        <begin position="1"/>
        <end position="81"/>
    </location>
</feature>
<feature type="active site" description="Cysteine persulfide intermediate" evidence="1">
    <location>
        <position position="19"/>
    </location>
</feature>
<keyword id="KW-0963">Cytoplasm</keyword>
<keyword id="KW-1185">Reference proteome</keyword>
<keyword id="KW-0819">tRNA processing</keyword>
<evidence type="ECO:0000255" key="1">
    <source>
        <dbReference type="HAMAP-Rule" id="MF_00413"/>
    </source>
</evidence>
<name>TUSA_CROS8</name>
<proteinExistence type="inferred from homology"/>
<organism>
    <name type="scientific">Cronobacter sakazakii (strain ATCC BAA-894)</name>
    <name type="common">Enterobacter sakazakii</name>
    <dbReference type="NCBI Taxonomy" id="290339"/>
    <lineage>
        <taxon>Bacteria</taxon>
        <taxon>Pseudomonadati</taxon>
        <taxon>Pseudomonadota</taxon>
        <taxon>Gammaproteobacteria</taxon>
        <taxon>Enterobacterales</taxon>
        <taxon>Enterobacteriaceae</taxon>
        <taxon>Cronobacter</taxon>
    </lineage>
</organism>
<gene>
    <name evidence="1" type="primary">tusA</name>
    <name type="ordered locus">ESA_04263</name>
</gene>
<protein>
    <recommendedName>
        <fullName evidence="1">Sulfur carrier protein TusA</fullName>
    </recommendedName>
    <alternativeName>
        <fullName evidence="1">Sulfur mediator TusA</fullName>
    </alternativeName>
    <alternativeName>
        <fullName evidence="1">Sulfur transfer protein TusA</fullName>
    </alternativeName>
    <alternativeName>
        <fullName evidence="1">tRNA 2-thiouridine synthesizing protein A</fullName>
    </alternativeName>
</protein>
<reference key="1">
    <citation type="journal article" date="2010" name="PLoS ONE">
        <title>Genome sequence of Cronobacter sakazakii BAA-894 and comparative genomic hybridization analysis with other Cronobacter species.</title>
        <authorList>
            <person name="Kucerova E."/>
            <person name="Clifton S.W."/>
            <person name="Xia X.Q."/>
            <person name="Long F."/>
            <person name="Porwollik S."/>
            <person name="Fulton L."/>
            <person name="Fronick C."/>
            <person name="Minx P."/>
            <person name="Kyung K."/>
            <person name="Warren W."/>
            <person name="Fulton R."/>
            <person name="Feng D."/>
            <person name="Wollam A."/>
            <person name="Shah N."/>
            <person name="Bhonagiri V."/>
            <person name="Nash W.E."/>
            <person name="Hallsworth-Pepin K."/>
            <person name="Wilson R.K."/>
            <person name="McClelland M."/>
            <person name="Forsythe S.J."/>
        </authorList>
    </citation>
    <scope>NUCLEOTIDE SEQUENCE [LARGE SCALE GENOMIC DNA]</scope>
    <source>
        <strain>ATCC BAA-894</strain>
    </source>
</reference>